<evidence type="ECO:0000255" key="1">
    <source>
        <dbReference type="HAMAP-Rule" id="MF_01954"/>
    </source>
</evidence>
<accession>Q2JES5</accession>
<protein>
    <recommendedName>
        <fullName evidence="1">Urease subunit beta</fullName>
        <ecNumber evidence="1">3.5.1.5</ecNumber>
    </recommendedName>
    <alternativeName>
        <fullName evidence="1">Urea amidohydrolase subunit beta</fullName>
    </alternativeName>
</protein>
<reference key="1">
    <citation type="journal article" date="2007" name="Genome Res.">
        <title>Genome characteristics of facultatively symbiotic Frankia sp. strains reflect host range and host plant biogeography.</title>
        <authorList>
            <person name="Normand P."/>
            <person name="Lapierre P."/>
            <person name="Tisa L.S."/>
            <person name="Gogarten J.P."/>
            <person name="Alloisio N."/>
            <person name="Bagnarol E."/>
            <person name="Bassi C.A."/>
            <person name="Berry A.M."/>
            <person name="Bickhart D.M."/>
            <person name="Choisne N."/>
            <person name="Couloux A."/>
            <person name="Cournoyer B."/>
            <person name="Cruveiller S."/>
            <person name="Daubin V."/>
            <person name="Demange N."/>
            <person name="Francino M.P."/>
            <person name="Goltsman E."/>
            <person name="Huang Y."/>
            <person name="Kopp O.R."/>
            <person name="Labarre L."/>
            <person name="Lapidus A."/>
            <person name="Lavire C."/>
            <person name="Marechal J."/>
            <person name="Martinez M."/>
            <person name="Mastronunzio J.E."/>
            <person name="Mullin B.C."/>
            <person name="Niemann J."/>
            <person name="Pujic P."/>
            <person name="Rawnsley T."/>
            <person name="Rouy Z."/>
            <person name="Schenowitz C."/>
            <person name="Sellstedt A."/>
            <person name="Tavares F."/>
            <person name="Tomkins J.P."/>
            <person name="Vallenet D."/>
            <person name="Valverde C."/>
            <person name="Wall L.G."/>
            <person name="Wang Y."/>
            <person name="Medigue C."/>
            <person name="Benson D.R."/>
        </authorList>
    </citation>
    <scope>NUCLEOTIDE SEQUENCE [LARGE SCALE GENOMIC DNA]</scope>
    <source>
        <strain>DSM 45818 / CECT 9043 / HFP020203 / CcI3</strain>
    </source>
</reference>
<dbReference type="EC" id="3.5.1.5" evidence="1"/>
<dbReference type="EMBL" id="CP000249">
    <property type="protein sequence ID" value="ABD10217.1"/>
    <property type="molecule type" value="Genomic_DNA"/>
</dbReference>
<dbReference type="RefSeq" id="WP_011435286.1">
    <property type="nucleotide sequence ID" value="NZ_MSEA01000166.1"/>
</dbReference>
<dbReference type="SMR" id="Q2JES5"/>
<dbReference type="STRING" id="106370.Francci3_0833"/>
<dbReference type="KEGG" id="fra:Francci3_0833"/>
<dbReference type="eggNOG" id="COG0832">
    <property type="taxonomic scope" value="Bacteria"/>
</dbReference>
<dbReference type="HOGENOM" id="CLU_129707_1_1_11"/>
<dbReference type="OrthoDB" id="9797217at2"/>
<dbReference type="PhylomeDB" id="Q2JES5"/>
<dbReference type="UniPathway" id="UPA00258">
    <property type="reaction ID" value="UER00370"/>
</dbReference>
<dbReference type="Proteomes" id="UP000001937">
    <property type="component" value="Chromosome"/>
</dbReference>
<dbReference type="GO" id="GO:0035550">
    <property type="term" value="C:urease complex"/>
    <property type="evidence" value="ECO:0007669"/>
    <property type="project" value="InterPro"/>
</dbReference>
<dbReference type="GO" id="GO:0009039">
    <property type="term" value="F:urease activity"/>
    <property type="evidence" value="ECO:0007669"/>
    <property type="project" value="UniProtKB-UniRule"/>
</dbReference>
<dbReference type="GO" id="GO:0043419">
    <property type="term" value="P:urea catabolic process"/>
    <property type="evidence" value="ECO:0007669"/>
    <property type="project" value="UniProtKB-UniRule"/>
</dbReference>
<dbReference type="CDD" id="cd00407">
    <property type="entry name" value="Urease_beta"/>
    <property type="match status" value="1"/>
</dbReference>
<dbReference type="Gene3D" id="2.10.150.10">
    <property type="entry name" value="Urease, beta subunit"/>
    <property type="match status" value="1"/>
</dbReference>
<dbReference type="HAMAP" id="MF_01954">
    <property type="entry name" value="Urease_beta"/>
    <property type="match status" value="1"/>
</dbReference>
<dbReference type="InterPro" id="IPR002019">
    <property type="entry name" value="Urease_beta-like"/>
</dbReference>
<dbReference type="InterPro" id="IPR036461">
    <property type="entry name" value="Urease_betasu_sf"/>
</dbReference>
<dbReference type="InterPro" id="IPR050069">
    <property type="entry name" value="Urease_subunit"/>
</dbReference>
<dbReference type="NCBIfam" id="NF009682">
    <property type="entry name" value="PRK13203.1"/>
    <property type="match status" value="1"/>
</dbReference>
<dbReference type="NCBIfam" id="TIGR00192">
    <property type="entry name" value="urease_beta"/>
    <property type="match status" value="1"/>
</dbReference>
<dbReference type="PANTHER" id="PTHR33569">
    <property type="entry name" value="UREASE"/>
    <property type="match status" value="1"/>
</dbReference>
<dbReference type="PANTHER" id="PTHR33569:SF1">
    <property type="entry name" value="UREASE"/>
    <property type="match status" value="1"/>
</dbReference>
<dbReference type="Pfam" id="PF00699">
    <property type="entry name" value="Urease_beta"/>
    <property type="match status" value="1"/>
</dbReference>
<dbReference type="SUPFAM" id="SSF51278">
    <property type="entry name" value="Urease, beta-subunit"/>
    <property type="match status" value="1"/>
</dbReference>
<organism>
    <name type="scientific">Frankia casuarinae (strain DSM 45818 / CECT 9043 / HFP020203 / CcI3)</name>
    <dbReference type="NCBI Taxonomy" id="106370"/>
    <lineage>
        <taxon>Bacteria</taxon>
        <taxon>Bacillati</taxon>
        <taxon>Actinomycetota</taxon>
        <taxon>Actinomycetes</taxon>
        <taxon>Frankiales</taxon>
        <taxon>Frankiaceae</taxon>
        <taxon>Frankia</taxon>
    </lineage>
</organism>
<name>URE2_FRACC</name>
<comment type="catalytic activity">
    <reaction evidence="1">
        <text>urea + 2 H2O + H(+) = hydrogencarbonate + 2 NH4(+)</text>
        <dbReference type="Rhea" id="RHEA:20557"/>
        <dbReference type="ChEBI" id="CHEBI:15377"/>
        <dbReference type="ChEBI" id="CHEBI:15378"/>
        <dbReference type="ChEBI" id="CHEBI:16199"/>
        <dbReference type="ChEBI" id="CHEBI:17544"/>
        <dbReference type="ChEBI" id="CHEBI:28938"/>
        <dbReference type="EC" id="3.5.1.5"/>
    </reaction>
</comment>
<comment type="pathway">
    <text evidence="1">Nitrogen metabolism; urea degradation; CO(2) and NH(3) from urea (urease route): step 1/1.</text>
</comment>
<comment type="subunit">
    <text evidence="1">Heterotrimer of UreA (gamma), UreB (beta) and UreC (alpha) subunits. Three heterotrimers associate to form the active enzyme.</text>
</comment>
<comment type="subcellular location">
    <subcellularLocation>
        <location evidence="1">Cytoplasm</location>
    </subcellularLocation>
</comment>
<comment type="similarity">
    <text evidence="1">Belongs to the urease beta subunit family.</text>
</comment>
<sequence length="126" mass="13178">MIPGEILTGDDPVEINAGRPVRTVLVRNMGDRPVQVGSHYHFAAANPALDFDRASAWGHRLAVPAGTAVRFEPGVEREIELVPLAGARVVPGLRPESAGPLDAASGTRIADTATIEDISGFQGEGS</sequence>
<feature type="chain" id="PRO_0000239892" description="Urease subunit beta">
    <location>
        <begin position="1"/>
        <end position="126"/>
    </location>
</feature>
<gene>
    <name evidence="1" type="primary">ureB</name>
    <name type="ordered locus">Francci3_0833</name>
</gene>
<proteinExistence type="inferred from homology"/>
<keyword id="KW-0963">Cytoplasm</keyword>
<keyword id="KW-0378">Hydrolase</keyword>
<keyword id="KW-1185">Reference proteome</keyword>